<gene>
    <name evidence="2" type="primary">PNMA6E</name>
</gene>
<protein>
    <recommendedName>
        <fullName evidence="2">Paraneoplastic antigen Ma6E</fullName>
    </recommendedName>
</protein>
<name>PMA6E_HUMAN</name>
<accession>A0A0J9YXQ4</accession>
<reference key="1">
    <citation type="journal article" date="2005" name="Nature">
        <title>The DNA sequence of the human X chromosome.</title>
        <authorList>
            <person name="Ross M.T."/>
            <person name="Grafham D.V."/>
            <person name="Coffey A.J."/>
            <person name="Scherer S."/>
            <person name="McLay K."/>
            <person name="Muzny D."/>
            <person name="Platzer M."/>
            <person name="Howell G.R."/>
            <person name="Burrows C."/>
            <person name="Bird C.P."/>
            <person name="Frankish A."/>
            <person name="Lovell F.L."/>
            <person name="Howe K.L."/>
            <person name="Ashurst J.L."/>
            <person name="Fulton R.S."/>
            <person name="Sudbrak R."/>
            <person name="Wen G."/>
            <person name="Jones M.C."/>
            <person name="Hurles M.E."/>
            <person name="Andrews T.D."/>
            <person name="Scott C.E."/>
            <person name="Searle S."/>
            <person name="Ramser J."/>
            <person name="Whittaker A."/>
            <person name="Deadman R."/>
            <person name="Carter N.P."/>
            <person name="Hunt S.E."/>
            <person name="Chen R."/>
            <person name="Cree A."/>
            <person name="Gunaratne P."/>
            <person name="Havlak P."/>
            <person name="Hodgson A."/>
            <person name="Metzker M.L."/>
            <person name="Richards S."/>
            <person name="Scott G."/>
            <person name="Steffen D."/>
            <person name="Sodergren E."/>
            <person name="Wheeler D.A."/>
            <person name="Worley K.C."/>
            <person name="Ainscough R."/>
            <person name="Ambrose K.D."/>
            <person name="Ansari-Lari M.A."/>
            <person name="Aradhya S."/>
            <person name="Ashwell R.I."/>
            <person name="Babbage A.K."/>
            <person name="Bagguley C.L."/>
            <person name="Ballabio A."/>
            <person name="Banerjee R."/>
            <person name="Barker G.E."/>
            <person name="Barlow K.F."/>
            <person name="Barrett I.P."/>
            <person name="Bates K.N."/>
            <person name="Beare D.M."/>
            <person name="Beasley H."/>
            <person name="Beasley O."/>
            <person name="Beck A."/>
            <person name="Bethel G."/>
            <person name="Blechschmidt K."/>
            <person name="Brady N."/>
            <person name="Bray-Allen S."/>
            <person name="Bridgeman A.M."/>
            <person name="Brown A.J."/>
            <person name="Brown M.J."/>
            <person name="Bonnin D."/>
            <person name="Bruford E.A."/>
            <person name="Buhay C."/>
            <person name="Burch P."/>
            <person name="Burford D."/>
            <person name="Burgess J."/>
            <person name="Burrill W."/>
            <person name="Burton J."/>
            <person name="Bye J.M."/>
            <person name="Carder C."/>
            <person name="Carrel L."/>
            <person name="Chako J."/>
            <person name="Chapman J.C."/>
            <person name="Chavez D."/>
            <person name="Chen E."/>
            <person name="Chen G."/>
            <person name="Chen Y."/>
            <person name="Chen Z."/>
            <person name="Chinault C."/>
            <person name="Ciccodicola A."/>
            <person name="Clark S.Y."/>
            <person name="Clarke G."/>
            <person name="Clee C.M."/>
            <person name="Clegg S."/>
            <person name="Clerc-Blankenburg K."/>
            <person name="Clifford K."/>
            <person name="Cobley V."/>
            <person name="Cole C.G."/>
            <person name="Conquer J.S."/>
            <person name="Corby N."/>
            <person name="Connor R.E."/>
            <person name="David R."/>
            <person name="Davies J."/>
            <person name="Davis C."/>
            <person name="Davis J."/>
            <person name="Delgado O."/>
            <person name="Deshazo D."/>
            <person name="Dhami P."/>
            <person name="Ding Y."/>
            <person name="Dinh H."/>
            <person name="Dodsworth S."/>
            <person name="Draper H."/>
            <person name="Dugan-Rocha S."/>
            <person name="Dunham A."/>
            <person name="Dunn M."/>
            <person name="Durbin K.J."/>
            <person name="Dutta I."/>
            <person name="Eades T."/>
            <person name="Ellwood M."/>
            <person name="Emery-Cohen A."/>
            <person name="Errington H."/>
            <person name="Evans K.L."/>
            <person name="Faulkner L."/>
            <person name="Francis F."/>
            <person name="Frankland J."/>
            <person name="Fraser A.E."/>
            <person name="Galgoczy P."/>
            <person name="Gilbert J."/>
            <person name="Gill R."/>
            <person name="Gloeckner G."/>
            <person name="Gregory S.G."/>
            <person name="Gribble S."/>
            <person name="Griffiths C."/>
            <person name="Grocock R."/>
            <person name="Gu Y."/>
            <person name="Gwilliam R."/>
            <person name="Hamilton C."/>
            <person name="Hart E.A."/>
            <person name="Hawes A."/>
            <person name="Heath P.D."/>
            <person name="Heitmann K."/>
            <person name="Hennig S."/>
            <person name="Hernandez J."/>
            <person name="Hinzmann B."/>
            <person name="Ho S."/>
            <person name="Hoffs M."/>
            <person name="Howden P.J."/>
            <person name="Huckle E.J."/>
            <person name="Hume J."/>
            <person name="Hunt P.J."/>
            <person name="Hunt A.R."/>
            <person name="Isherwood J."/>
            <person name="Jacob L."/>
            <person name="Johnson D."/>
            <person name="Jones S."/>
            <person name="de Jong P.J."/>
            <person name="Joseph S.S."/>
            <person name="Keenan S."/>
            <person name="Kelly S."/>
            <person name="Kershaw J.K."/>
            <person name="Khan Z."/>
            <person name="Kioschis P."/>
            <person name="Klages S."/>
            <person name="Knights A.J."/>
            <person name="Kosiura A."/>
            <person name="Kovar-Smith C."/>
            <person name="Laird G.K."/>
            <person name="Langford C."/>
            <person name="Lawlor S."/>
            <person name="Leversha M."/>
            <person name="Lewis L."/>
            <person name="Liu W."/>
            <person name="Lloyd C."/>
            <person name="Lloyd D.M."/>
            <person name="Loulseged H."/>
            <person name="Loveland J.E."/>
            <person name="Lovell J.D."/>
            <person name="Lozado R."/>
            <person name="Lu J."/>
            <person name="Lyne R."/>
            <person name="Ma J."/>
            <person name="Maheshwari M."/>
            <person name="Matthews L.H."/>
            <person name="McDowall J."/>
            <person name="McLaren S."/>
            <person name="McMurray A."/>
            <person name="Meidl P."/>
            <person name="Meitinger T."/>
            <person name="Milne S."/>
            <person name="Miner G."/>
            <person name="Mistry S.L."/>
            <person name="Morgan M."/>
            <person name="Morris S."/>
            <person name="Mueller I."/>
            <person name="Mullikin J.C."/>
            <person name="Nguyen N."/>
            <person name="Nordsiek G."/>
            <person name="Nyakatura G."/>
            <person name="O'dell C.N."/>
            <person name="Okwuonu G."/>
            <person name="Palmer S."/>
            <person name="Pandian R."/>
            <person name="Parker D."/>
            <person name="Parrish J."/>
            <person name="Pasternak S."/>
            <person name="Patel D."/>
            <person name="Pearce A.V."/>
            <person name="Pearson D.M."/>
            <person name="Pelan S.E."/>
            <person name="Perez L."/>
            <person name="Porter K.M."/>
            <person name="Ramsey Y."/>
            <person name="Reichwald K."/>
            <person name="Rhodes S."/>
            <person name="Ridler K.A."/>
            <person name="Schlessinger D."/>
            <person name="Schueler M.G."/>
            <person name="Sehra H.K."/>
            <person name="Shaw-Smith C."/>
            <person name="Shen H."/>
            <person name="Sheridan E.M."/>
            <person name="Shownkeen R."/>
            <person name="Skuce C.D."/>
            <person name="Smith M.L."/>
            <person name="Sotheran E.C."/>
            <person name="Steingruber H.E."/>
            <person name="Steward C.A."/>
            <person name="Storey R."/>
            <person name="Swann R.M."/>
            <person name="Swarbreck D."/>
            <person name="Tabor P.E."/>
            <person name="Taudien S."/>
            <person name="Taylor T."/>
            <person name="Teague B."/>
            <person name="Thomas K."/>
            <person name="Thorpe A."/>
            <person name="Timms K."/>
            <person name="Tracey A."/>
            <person name="Trevanion S."/>
            <person name="Tromans A.C."/>
            <person name="d'Urso M."/>
            <person name="Verduzco D."/>
            <person name="Villasana D."/>
            <person name="Waldron L."/>
            <person name="Wall M."/>
            <person name="Wang Q."/>
            <person name="Warren J."/>
            <person name="Warry G.L."/>
            <person name="Wei X."/>
            <person name="West A."/>
            <person name="Whitehead S.L."/>
            <person name="Whiteley M.N."/>
            <person name="Wilkinson J.E."/>
            <person name="Willey D.L."/>
            <person name="Williams G."/>
            <person name="Williams L."/>
            <person name="Williamson A."/>
            <person name="Williamson H."/>
            <person name="Wilming L."/>
            <person name="Woodmansey R.L."/>
            <person name="Wray P.W."/>
            <person name="Yen J."/>
            <person name="Zhang J."/>
            <person name="Zhou J."/>
            <person name="Zoghbi H."/>
            <person name="Zorilla S."/>
            <person name="Buck D."/>
            <person name="Reinhardt R."/>
            <person name="Poustka A."/>
            <person name="Rosenthal A."/>
            <person name="Lehrach H."/>
            <person name="Meindl A."/>
            <person name="Minx P.J."/>
            <person name="Hillier L.W."/>
            <person name="Willard H.F."/>
            <person name="Wilson R.K."/>
            <person name="Waterston R.H."/>
            <person name="Rice C.M."/>
            <person name="Vaudin M."/>
            <person name="Coulson A."/>
            <person name="Nelson D.L."/>
            <person name="Weinstock G."/>
            <person name="Sulston J.E."/>
            <person name="Durbin R.M."/>
            <person name="Hubbard T."/>
            <person name="Gibbs R.A."/>
            <person name="Beck S."/>
            <person name="Rogers J."/>
            <person name="Bentley D.R."/>
        </authorList>
    </citation>
    <scope>NUCLEOTIDE SEQUENCE [LARGE SCALE GENOMIC DNA]</scope>
</reference>
<evidence type="ECO:0000256" key="1">
    <source>
        <dbReference type="SAM" id="MobiDB-lite"/>
    </source>
</evidence>
<evidence type="ECO:0000312" key="2">
    <source>
        <dbReference type="HGNC" id="HGNC:50767"/>
    </source>
</evidence>
<dbReference type="EMBL" id="BX469942">
    <property type="status" value="NOT_ANNOTATED_CDS"/>
    <property type="molecule type" value="Genomic_DNA"/>
</dbReference>
<dbReference type="EMBL" id="U82695">
    <property type="status" value="NOT_ANNOTATED_CDS"/>
    <property type="molecule type" value="Genomic_DNA"/>
</dbReference>
<dbReference type="CCDS" id="CCDS94694.1"/>
<dbReference type="RefSeq" id="NP_001354699.1">
    <property type="nucleotide sequence ID" value="NM_001367770.1"/>
</dbReference>
<dbReference type="RefSeq" id="XP_047298330.1">
    <property type="nucleotide sequence ID" value="XM_047442374.1"/>
</dbReference>
<dbReference type="SMR" id="A0A0J9YXQ4"/>
<dbReference type="IntAct" id="A0A0J9YXQ4">
    <property type="interactions" value="1"/>
</dbReference>
<dbReference type="STRING" id="9606.ENSP00000488404"/>
<dbReference type="BioMuta" id="PNMA6E"/>
<dbReference type="jPOST" id="A0A0J9YXQ4"/>
<dbReference type="MassIVE" id="A0A0J9YXQ4"/>
<dbReference type="PeptideAtlas" id="A0A0J9YXQ4"/>
<dbReference type="Ensembl" id="ENST00000445091.3">
    <property type="protein sequence ID" value="ENSP00000488500.1"/>
    <property type="gene ID" value="ENSG00000214897.5"/>
</dbReference>
<dbReference type="GeneID" id="649238"/>
<dbReference type="MANE-Select" id="ENST00000445091.3">
    <property type="protein sequence ID" value="ENSP00000488500.1"/>
    <property type="RefSeq nucleotide sequence ID" value="NM_001367770.1"/>
    <property type="RefSeq protein sequence ID" value="NP_001354699.1"/>
</dbReference>
<dbReference type="AGR" id="HGNC:50767"/>
<dbReference type="GeneCards" id="PNMA6E"/>
<dbReference type="HGNC" id="HGNC:50767">
    <property type="gene designation" value="PNMA6E"/>
</dbReference>
<dbReference type="HPA" id="ENSG00000214897">
    <property type="expression patterns" value="Tissue enhanced (epididymis, ovary, testis)"/>
</dbReference>
<dbReference type="neXtProt" id="NX_A0A0J9YXQ4"/>
<dbReference type="OpenTargets" id="ENSG00000214897"/>
<dbReference type="VEuPathDB" id="HostDB:ENSG00000214897"/>
<dbReference type="GeneTree" id="ENSGT01030000234522"/>
<dbReference type="InParanoid" id="A0A0J9YXQ4"/>
<dbReference type="OMA" id="KAWVQPW"/>
<dbReference type="OrthoDB" id="115435at2759"/>
<dbReference type="PAN-GO" id="A0A0J9YXQ4">
    <property type="GO annotations" value="0 GO annotations based on evolutionary models"/>
</dbReference>
<dbReference type="SignaLink" id="A0A0J9YXQ4"/>
<dbReference type="Pharos" id="A0A0J9YXQ4">
    <property type="development level" value="Tdark"/>
</dbReference>
<dbReference type="PRO" id="PR:A0A0J9YXQ4"/>
<dbReference type="Proteomes" id="UP000005640">
    <property type="component" value="Chromosome X"/>
</dbReference>
<dbReference type="RNAct" id="A0A0J9YXQ4">
    <property type="molecule type" value="protein"/>
</dbReference>
<dbReference type="Bgee" id="ENSG00000214897">
    <property type="expression patterns" value="Expressed in right testis and 13 other cell types or tissues"/>
</dbReference>
<dbReference type="ExpressionAtlas" id="A0A0J9YXQ4">
    <property type="expression patterns" value="baseline and differential"/>
</dbReference>
<dbReference type="InterPro" id="IPR026523">
    <property type="entry name" value="PNMA"/>
</dbReference>
<dbReference type="InterPro" id="IPR048270">
    <property type="entry name" value="PNMA_C"/>
</dbReference>
<dbReference type="InterPro" id="IPR048271">
    <property type="entry name" value="PNMA_N"/>
</dbReference>
<dbReference type="PANTHER" id="PTHR23095">
    <property type="entry name" value="PARANEOPLASTIC ANTIGEN"/>
    <property type="match status" value="1"/>
</dbReference>
<dbReference type="PANTHER" id="PTHR23095:SF20">
    <property type="entry name" value="PARANEOPLASTIC ANTIGEN MA6E"/>
    <property type="match status" value="1"/>
</dbReference>
<dbReference type="Pfam" id="PF14893">
    <property type="entry name" value="PNMA"/>
    <property type="match status" value="1"/>
</dbReference>
<dbReference type="Pfam" id="PF20846">
    <property type="entry name" value="PNMA_N"/>
    <property type="match status" value="1"/>
</dbReference>
<sequence>MALAMLRDWCRWMGANAERSLLILGIPDDCKEHEFQEAVRAALSPLGRYRVLTKHFRKELGAKAALVEFAEYLNRSLIPHQIPGNGGPWKVIFLPQVPVIEFQDMPSFPAQPQGQAVAKAAGEGGGAGEAGGVGEVGAAGEAGGTGEAGATGEAGAAGEAGGAGEAGGVGEAGAAGEAGGAGEAGAAGEGGAAGEAGGAGEAGGVGEAGAAGEAGGAGEAGGVGEAGAAGEAGGAGEAGAAGEAGGAGEGRAAGEAGAAGEAGAVGEAGAAGEAGAVGEAGAAGEAGAVGEAGGTNVTKAWVQPWRCTLQPVLENRAYRELRPFSRREQPGCEEESFESWVEHAKDMLQLWCHASEREKKRWLLESLGGPALEVVSGLLEEDTNLSALDCLAALGQVFRNQDTRMTSRLKFLTCTQGPQEGLFAFVVRLEGLLQRAVEKGAVCPALANYLRLQQVLSWARPSEALQDTLRGMQLEKRPPGFLGLLRLIREMEAWAAFPARSQQGVAWAAAPVESEDPAAAQASPAQGNASEAGPGAEDAAEAASATKEAARGAPAAGEGESAPAGPEGLGQARPIEVPWGSSPARMSSAVWVFPRGLSWGPEGLIQVRGQEARKPPLEGLQTILEEPENEDEDGAGDEGQPKSSQGK</sequence>
<proteinExistence type="evidence at protein level"/>
<keyword id="KW-1267">Proteomics identification</keyword>
<keyword id="KW-1185">Reference proteome</keyword>
<feature type="chain" id="PRO_0000440654" description="Paraneoplastic antigen Ma6E">
    <location>
        <begin position="1"/>
        <end position="647"/>
    </location>
</feature>
<feature type="region of interest" description="Disordered" evidence="1">
    <location>
        <begin position="111"/>
        <end position="199"/>
    </location>
</feature>
<feature type="region of interest" description="Disordered" evidence="1">
    <location>
        <begin position="227"/>
        <end position="254"/>
    </location>
</feature>
<feature type="region of interest" description="Disordered" evidence="1">
    <location>
        <begin position="508"/>
        <end position="580"/>
    </location>
</feature>
<feature type="region of interest" description="Disordered" evidence="1">
    <location>
        <begin position="608"/>
        <end position="647"/>
    </location>
</feature>
<feature type="compositionally biased region" description="Gly residues" evidence="1">
    <location>
        <begin position="122"/>
        <end position="149"/>
    </location>
</feature>
<feature type="compositionally biased region" description="Gly residues" evidence="1">
    <location>
        <begin position="158"/>
        <end position="199"/>
    </location>
</feature>
<feature type="compositionally biased region" description="Gly residues" evidence="1">
    <location>
        <begin position="227"/>
        <end position="251"/>
    </location>
</feature>
<feature type="compositionally biased region" description="Low complexity" evidence="1">
    <location>
        <begin position="517"/>
        <end position="570"/>
    </location>
</feature>
<feature type="compositionally biased region" description="Acidic residues" evidence="1">
    <location>
        <begin position="625"/>
        <end position="636"/>
    </location>
</feature>
<organism>
    <name type="scientific">Homo sapiens</name>
    <name type="common">Human</name>
    <dbReference type="NCBI Taxonomy" id="9606"/>
    <lineage>
        <taxon>Eukaryota</taxon>
        <taxon>Metazoa</taxon>
        <taxon>Chordata</taxon>
        <taxon>Craniata</taxon>
        <taxon>Vertebrata</taxon>
        <taxon>Euteleostomi</taxon>
        <taxon>Mammalia</taxon>
        <taxon>Eutheria</taxon>
        <taxon>Euarchontoglires</taxon>
        <taxon>Primates</taxon>
        <taxon>Haplorrhini</taxon>
        <taxon>Catarrhini</taxon>
        <taxon>Hominidae</taxon>
        <taxon>Homo</taxon>
    </lineage>
</organism>